<keyword id="KW-0175">Coiled coil</keyword>
<keyword id="KW-0597">Phosphoprotein</keyword>
<keyword id="KW-1267">Proteomics identification</keyword>
<keyword id="KW-1185">Reference proteome</keyword>
<sequence>MDIIKGNLDGISKPASNSRIRPGSRSSNASLEVLSTEPGSFKVDTASNLNSGKEDHSESSNTENRRTSNDDKQESCSEKIKLAEEGSDEDLDLVQHQIISECSDEPKLKELDSQLQDAIQKMKKLDKILAKKQRREKEIKKQGLEMRIKLWEEIKSAKYSEAWQSKEEMENTKKFLSLTAVSEETVGPSHEEEDTFSSVFHTQIPPEEYEMQMQKLNKDFTCDVERNESLIKSGKKPFSNTEKIELRGKHNQDFIKRNIELAKESRNPVVMVDREKKRLVELLKDLDEKDSGLSSSEGDQSGWVVPVKGYELAVTQHQQLAEIDIKLQELSAASPTISSFSPRLENRNNQKPDRDGERNMEVTPGEKILRNTKEQRDLHNRLREIDEKLKMMKENVLESTSCLSEEQLKCLLDECILKQKSIIKLSSERKKEDIEDVTPVFPQLSRSIISKLLNESETKVQKTEVEDADMLESEECEASKGYYLTKALTGHNMSEALVTEAENMKCLQFSKDVIISDTKDYFMSKTLGIGRLKRPSFLDDPLYGISVSLSSEDQHLKLSSPENTIADEQETKDAAEECKEP</sequence>
<proteinExistence type="evidence at protein level"/>
<gene>
    <name type="primary">FSIP1</name>
    <name type="ORF">HSD10</name>
</gene>
<name>FSIP1_HUMAN</name>
<reference key="1">
    <citation type="submission" date="2003-03" db="EMBL/GenBank/DDBJ databases">
        <title>A new spermatogenesis-related gene.</title>
        <authorList>
            <person name="Hu T.H."/>
            <person name="Miao S.Y."/>
            <person name="Zhang X.D."/>
            <person name="Qiao Y."/>
            <person name="Liang G."/>
            <person name="Wang L.F."/>
        </authorList>
    </citation>
    <scope>NUCLEOTIDE SEQUENCE [LARGE SCALE MRNA]</scope>
    <source>
        <tissue>Testis</tissue>
    </source>
</reference>
<reference key="2">
    <citation type="journal article" date="2004" name="Nat. Genet.">
        <title>Complete sequencing and characterization of 21,243 full-length human cDNAs.</title>
        <authorList>
            <person name="Ota T."/>
            <person name="Suzuki Y."/>
            <person name="Nishikawa T."/>
            <person name="Otsuki T."/>
            <person name="Sugiyama T."/>
            <person name="Irie R."/>
            <person name="Wakamatsu A."/>
            <person name="Hayashi K."/>
            <person name="Sato H."/>
            <person name="Nagai K."/>
            <person name="Kimura K."/>
            <person name="Makita H."/>
            <person name="Sekine M."/>
            <person name="Obayashi M."/>
            <person name="Nishi T."/>
            <person name="Shibahara T."/>
            <person name="Tanaka T."/>
            <person name="Ishii S."/>
            <person name="Yamamoto J."/>
            <person name="Saito K."/>
            <person name="Kawai Y."/>
            <person name="Isono Y."/>
            <person name="Nakamura Y."/>
            <person name="Nagahari K."/>
            <person name="Murakami K."/>
            <person name="Yasuda T."/>
            <person name="Iwayanagi T."/>
            <person name="Wagatsuma M."/>
            <person name="Shiratori A."/>
            <person name="Sudo H."/>
            <person name="Hosoiri T."/>
            <person name="Kaku Y."/>
            <person name="Kodaira H."/>
            <person name="Kondo H."/>
            <person name="Sugawara M."/>
            <person name="Takahashi M."/>
            <person name="Kanda K."/>
            <person name="Yokoi T."/>
            <person name="Furuya T."/>
            <person name="Kikkawa E."/>
            <person name="Omura Y."/>
            <person name="Abe K."/>
            <person name="Kamihara K."/>
            <person name="Katsuta N."/>
            <person name="Sato K."/>
            <person name="Tanikawa M."/>
            <person name="Yamazaki M."/>
            <person name="Ninomiya K."/>
            <person name="Ishibashi T."/>
            <person name="Yamashita H."/>
            <person name="Murakawa K."/>
            <person name="Fujimori K."/>
            <person name="Tanai H."/>
            <person name="Kimata M."/>
            <person name="Watanabe M."/>
            <person name="Hiraoka S."/>
            <person name="Chiba Y."/>
            <person name="Ishida S."/>
            <person name="Ono Y."/>
            <person name="Takiguchi S."/>
            <person name="Watanabe S."/>
            <person name="Yosida M."/>
            <person name="Hotuta T."/>
            <person name="Kusano J."/>
            <person name="Kanehori K."/>
            <person name="Takahashi-Fujii A."/>
            <person name="Hara H."/>
            <person name="Tanase T.-O."/>
            <person name="Nomura Y."/>
            <person name="Togiya S."/>
            <person name="Komai F."/>
            <person name="Hara R."/>
            <person name="Takeuchi K."/>
            <person name="Arita M."/>
            <person name="Imose N."/>
            <person name="Musashino K."/>
            <person name="Yuuki H."/>
            <person name="Oshima A."/>
            <person name="Sasaki N."/>
            <person name="Aotsuka S."/>
            <person name="Yoshikawa Y."/>
            <person name="Matsunawa H."/>
            <person name="Ichihara T."/>
            <person name="Shiohata N."/>
            <person name="Sano S."/>
            <person name="Moriya S."/>
            <person name="Momiyama H."/>
            <person name="Satoh N."/>
            <person name="Takami S."/>
            <person name="Terashima Y."/>
            <person name="Suzuki O."/>
            <person name="Nakagawa S."/>
            <person name="Senoh A."/>
            <person name="Mizoguchi H."/>
            <person name="Goto Y."/>
            <person name="Shimizu F."/>
            <person name="Wakebe H."/>
            <person name="Hishigaki H."/>
            <person name="Watanabe T."/>
            <person name="Sugiyama A."/>
            <person name="Takemoto M."/>
            <person name="Kawakami B."/>
            <person name="Yamazaki M."/>
            <person name="Watanabe K."/>
            <person name="Kumagai A."/>
            <person name="Itakura S."/>
            <person name="Fukuzumi Y."/>
            <person name="Fujimori Y."/>
            <person name="Komiyama M."/>
            <person name="Tashiro H."/>
            <person name="Tanigami A."/>
            <person name="Fujiwara T."/>
            <person name="Ono T."/>
            <person name="Yamada K."/>
            <person name="Fujii Y."/>
            <person name="Ozaki K."/>
            <person name="Hirao M."/>
            <person name="Ohmori Y."/>
            <person name="Kawabata A."/>
            <person name="Hikiji T."/>
            <person name="Kobatake N."/>
            <person name="Inagaki H."/>
            <person name="Ikema Y."/>
            <person name="Okamoto S."/>
            <person name="Okitani R."/>
            <person name="Kawakami T."/>
            <person name="Noguchi S."/>
            <person name="Itoh T."/>
            <person name="Shigeta K."/>
            <person name="Senba T."/>
            <person name="Matsumura K."/>
            <person name="Nakajima Y."/>
            <person name="Mizuno T."/>
            <person name="Morinaga M."/>
            <person name="Sasaki M."/>
            <person name="Togashi T."/>
            <person name="Oyama M."/>
            <person name="Hata H."/>
            <person name="Watanabe M."/>
            <person name="Komatsu T."/>
            <person name="Mizushima-Sugano J."/>
            <person name="Satoh T."/>
            <person name="Shirai Y."/>
            <person name="Takahashi Y."/>
            <person name="Nakagawa K."/>
            <person name="Okumura K."/>
            <person name="Nagase T."/>
            <person name="Nomura N."/>
            <person name="Kikuchi H."/>
            <person name="Masuho Y."/>
            <person name="Yamashita R."/>
            <person name="Nakai K."/>
            <person name="Yada T."/>
            <person name="Nakamura Y."/>
            <person name="Ohara O."/>
            <person name="Isogai T."/>
            <person name="Sugano S."/>
        </authorList>
    </citation>
    <scope>NUCLEOTIDE SEQUENCE [LARGE SCALE MRNA]</scope>
    <source>
        <tissue>Testis</tissue>
    </source>
</reference>
<reference key="3">
    <citation type="submission" date="2005-07" db="EMBL/GenBank/DDBJ databases">
        <authorList>
            <person name="Mural R.J."/>
            <person name="Istrail S."/>
            <person name="Sutton G.G."/>
            <person name="Florea L."/>
            <person name="Halpern A.L."/>
            <person name="Mobarry C.M."/>
            <person name="Lippert R."/>
            <person name="Walenz B."/>
            <person name="Shatkay H."/>
            <person name="Dew I."/>
            <person name="Miller J.R."/>
            <person name="Flanigan M.J."/>
            <person name="Edwards N.J."/>
            <person name="Bolanos R."/>
            <person name="Fasulo D."/>
            <person name="Halldorsson B.V."/>
            <person name="Hannenhalli S."/>
            <person name="Turner R."/>
            <person name="Yooseph S."/>
            <person name="Lu F."/>
            <person name="Nusskern D.R."/>
            <person name="Shue B.C."/>
            <person name="Zheng X.H."/>
            <person name="Zhong F."/>
            <person name="Delcher A.L."/>
            <person name="Huson D.H."/>
            <person name="Kravitz S.A."/>
            <person name="Mouchard L."/>
            <person name="Reinert K."/>
            <person name="Remington K.A."/>
            <person name="Clark A.G."/>
            <person name="Waterman M.S."/>
            <person name="Eichler E.E."/>
            <person name="Adams M.D."/>
            <person name="Hunkapiller M.W."/>
            <person name="Myers E.W."/>
            <person name="Venter J.C."/>
        </authorList>
    </citation>
    <scope>NUCLEOTIDE SEQUENCE [LARGE SCALE GENOMIC DNA]</scope>
    <scope>VARIANTS HIS-354 AND ARG-402</scope>
</reference>
<reference key="4">
    <citation type="journal article" date="2004" name="Genome Res.">
        <title>The status, quality, and expansion of the NIH full-length cDNA project: the Mammalian Gene Collection (MGC).</title>
        <authorList>
            <consortium name="The MGC Project Team"/>
        </authorList>
    </citation>
    <scope>NUCLEOTIDE SEQUENCE [LARGE SCALE MRNA]</scope>
    <source>
        <tissue>Testis</tissue>
    </source>
</reference>
<protein>
    <recommendedName>
        <fullName>Fibrous sheath-interacting protein 1</fullName>
    </recommendedName>
</protein>
<evidence type="ECO:0000250" key="1">
    <source>
        <dbReference type="UniProtKB" id="Q66H16"/>
    </source>
</evidence>
<evidence type="ECO:0000255" key="2"/>
<evidence type="ECO:0000256" key="3">
    <source>
        <dbReference type="SAM" id="MobiDB-lite"/>
    </source>
</evidence>
<evidence type="ECO:0000269" key="4">
    <source ref="3"/>
</evidence>
<evidence type="ECO:0000305" key="5"/>
<dbReference type="EMBL" id="AY260140">
    <property type="protein sequence ID" value="AAP20066.1"/>
    <property type="molecule type" value="mRNA"/>
</dbReference>
<dbReference type="EMBL" id="AK093308">
    <property type="protein sequence ID" value="BAC04128.1"/>
    <property type="molecule type" value="mRNA"/>
</dbReference>
<dbReference type="EMBL" id="CH471125">
    <property type="protein sequence ID" value="EAW92382.1"/>
    <property type="molecule type" value="Genomic_DNA"/>
</dbReference>
<dbReference type="EMBL" id="BC045191">
    <property type="protein sequence ID" value="AAH45191.1"/>
    <property type="molecule type" value="mRNA"/>
</dbReference>
<dbReference type="CCDS" id="CCDS10050.1"/>
<dbReference type="RefSeq" id="NP_001311267.1">
    <property type="nucleotide sequence ID" value="NM_001324338.2"/>
</dbReference>
<dbReference type="RefSeq" id="NP_689810.3">
    <property type="nucleotide sequence ID" value="NM_152597.4"/>
</dbReference>
<dbReference type="RefSeq" id="XP_011519607.1">
    <property type="nucleotide sequence ID" value="XM_011521305.4"/>
</dbReference>
<dbReference type="RefSeq" id="XP_011519608.1">
    <property type="nucleotide sequence ID" value="XM_011521306.3"/>
</dbReference>
<dbReference type="RefSeq" id="XP_054233383.1">
    <property type="nucleotide sequence ID" value="XM_054377408.1"/>
</dbReference>
<dbReference type="RefSeq" id="XP_054233384.1">
    <property type="nucleotide sequence ID" value="XM_054377409.1"/>
</dbReference>
<dbReference type="SMR" id="Q8NA03"/>
<dbReference type="BioGRID" id="127805">
    <property type="interactions" value="8"/>
</dbReference>
<dbReference type="FunCoup" id="Q8NA03">
    <property type="interactions" value="50"/>
</dbReference>
<dbReference type="IntAct" id="Q8NA03">
    <property type="interactions" value="3"/>
</dbReference>
<dbReference type="STRING" id="9606.ENSP00000280236"/>
<dbReference type="GlyGen" id="Q8NA03">
    <property type="glycosylation" value="1 site, 1 O-linked glycan (1 site)"/>
</dbReference>
<dbReference type="iPTMnet" id="Q8NA03"/>
<dbReference type="PhosphoSitePlus" id="Q8NA03"/>
<dbReference type="BioMuta" id="FSIP1"/>
<dbReference type="DMDM" id="74729808"/>
<dbReference type="jPOST" id="Q8NA03"/>
<dbReference type="MassIVE" id="Q8NA03"/>
<dbReference type="PaxDb" id="9606-ENSP00000280236"/>
<dbReference type="PeptideAtlas" id="Q8NA03"/>
<dbReference type="ProteomicsDB" id="72621"/>
<dbReference type="Antibodypedia" id="52142">
    <property type="antibodies" value="231 antibodies from 20 providers"/>
</dbReference>
<dbReference type="DNASU" id="161835"/>
<dbReference type="Ensembl" id="ENST00000350221.4">
    <property type="protein sequence ID" value="ENSP00000280236.3"/>
    <property type="gene ID" value="ENSG00000150667.8"/>
</dbReference>
<dbReference type="GeneID" id="161835"/>
<dbReference type="KEGG" id="hsa:161835"/>
<dbReference type="MANE-Select" id="ENST00000350221.4">
    <property type="protein sequence ID" value="ENSP00000280236.3"/>
    <property type="RefSeq nucleotide sequence ID" value="NM_152597.5"/>
    <property type="RefSeq protein sequence ID" value="NP_689810.3"/>
</dbReference>
<dbReference type="UCSC" id="uc001zki.4">
    <property type="organism name" value="human"/>
</dbReference>
<dbReference type="AGR" id="HGNC:21674"/>
<dbReference type="CTD" id="161835"/>
<dbReference type="DisGeNET" id="161835"/>
<dbReference type="GeneCards" id="FSIP1"/>
<dbReference type="HGNC" id="HGNC:21674">
    <property type="gene designation" value="FSIP1"/>
</dbReference>
<dbReference type="HPA" id="ENSG00000150667">
    <property type="expression patterns" value="Group enriched (intestine, testis)"/>
</dbReference>
<dbReference type="MIM" id="615795">
    <property type="type" value="gene"/>
</dbReference>
<dbReference type="neXtProt" id="NX_Q8NA03"/>
<dbReference type="OpenTargets" id="ENSG00000150667"/>
<dbReference type="PharmGKB" id="PA142671750"/>
<dbReference type="VEuPathDB" id="HostDB:ENSG00000150667"/>
<dbReference type="eggNOG" id="ENOG502RXFB">
    <property type="taxonomic scope" value="Eukaryota"/>
</dbReference>
<dbReference type="GeneTree" id="ENSGT00390000013879"/>
<dbReference type="HOGENOM" id="CLU_031884_1_0_1"/>
<dbReference type="InParanoid" id="Q8NA03"/>
<dbReference type="OMA" id="EPASCKV"/>
<dbReference type="OrthoDB" id="9946895at2759"/>
<dbReference type="PAN-GO" id="Q8NA03">
    <property type="GO annotations" value="0 GO annotations based on evolutionary models"/>
</dbReference>
<dbReference type="PhylomeDB" id="Q8NA03"/>
<dbReference type="TreeFam" id="TF351151"/>
<dbReference type="PathwayCommons" id="Q8NA03"/>
<dbReference type="SignaLink" id="Q8NA03"/>
<dbReference type="BioGRID-ORCS" id="161835">
    <property type="hits" value="13 hits in 1147 CRISPR screens"/>
</dbReference>
<dbReference type="ChiTaRS" id="FSIP1">
    <property type="organism name" value="human"/>
</dbReference>
<dbReference type="GenomeRNAi" id="161835"/>
<dbReference type="Pharos" id="Q8NA03">
    <property type="development level" value="Tbio"/>
</dbReference>
<dbReference type="PRO" id="PR:Q8NA03"/>
<dbReference type="Proteomes" id="UP000005640">
    <property type="component" value="Chromosome 15"/>
</dbReference>
<dbReference type="RNAct" id="Q8NA03">
    <property type="molecule type" value="protein"/>
</dbReference>
<dbReference type="Bgee" id="ENSG00000150667">
    <property type="expression patterns" value="Expressed in mucosa of transverse colon and 103 other cell types or tissues"/>
</dbReference>
<dbReference type="ExpressionAtlas" id="Q8NA03">
    <property type="expression patterns" value="baseline and differential"/>
</dbReference>
<dbReference type="InterPro" id="IPR026246">
    <property type="entry name" value="Fsip1"/>
</dbReference>
<dbReference type="PANTHER" id="PTHR22012">
    <property type="entry name" value="FIBROUS SHEATH INTERACTING PROTEIN 1"/>
    <property type="match status" value="1"/>
</dbReference>
<dbReference type="PANTHER" id="PTHR22012:SF2">
    <property type="entry name" value="FIBROUS SHEATH-INTERACTING PROTEIN 1"/>
    <property type="match status" value="1"/>
</dbReference>
<dbReference type="Pfam" id="PF15554">
    <property type="entry name" value="FSIP1"/>
    <property type="match status" value="1"/>
</dbReference>
<dbReference type="PRINTS" id="PR02075">
    <property type="entry name" value="FIBSHEATHIP1"/>
</dbReference>
<organism>
    <name type="scientific">Homo sapiens</name>
    <name type="common">Human</name>
    <dbReference type="NCBI Taxonomy" id="9606"/>
    <lineage>
        <taxon>Eukaryota</taxon>
        <taxon>Metazoa</taxon>
        <taxon>Chordata</taxon>
        <taxon>Craniata</taxon>
        <taxon>Vertebrata</taxon>
        <taxon>Euteleostomi</taxon>
        <taxon>Mammalia</taxon>
        <taxon>Eutheria</taxon>
        <taxon>Euarchontoglires</taxon>
        <taxon>Primates</taxon>
        <taxon>Haplorrhini</taxon>
        <taxon>Catarrhini</taxon>
        <taxon>Hominidae</taxon>
        <taxon>Homo</taxon>
    </lineage>
</organism>
<comment type="similarity">
    <text evidence="5">Belongs to the FSIP1 family.</text>
</comment>
<feature type="chain" id="PRO_0000314918" description="Fibrous sheath-interacting protein 1">
    <location>
        <begin position="1"/>
        <end position="581"/>
    </location>
</feature>
<feature type="region of interest" description="Disordered" evidence="3">
    <location>
        <begin position="1"/>
        <end position="77"/>
    </location>
</feature>
<feature type="region of interest" description="Disordered" evidence="3">
    <location>
        <begin position="338"/>
        <end position="365"/>
    </location>
</feature>
<feature type="region of interest" description="Disordered" evidence="3">
    <location>
        <begin position="555"/>
        <end position="581"/>
    </location>
</feature>
<feature type="coiled-coil region" evidence="2">
    <location>
        <begin position="105"/>
        <end position="153"/>
    </location>
</feature>
<feature type="compositionally biased region" description="Polar residues" evidence="3">
    <location>
        <begin position="14"/>
        <end position="30"/>
    </location>
</feature>
<feature type="compositionally biased region" description="Basic and acidic residues" evidence="3">
    <location>
        <begin position="52"/>
        <end position="77"/>
    </location>
</feature>
<feature type="compositionally biased region" description="Basic and acidic residues" evidence="3">
    <location>
        <begin position="344"/>
        <end position="360"/>
    </location>
</feature>
<feature type="compositionally biased region" description="Basic and acidic residues" evidence="3">
    <location>
        <begin position="569"/>
        <end position="581"/>
    </location>
</feature>
<feature type="modified residue" description="Phosphoserine" evidence="1">
    <location>
        <position position="87"/>
    </location>
</feature>
<feature type="sequence variant" id="VAR_038124" description="In dbSNP:rs1166719.">
    <original>N</original>
    <variation>D</variation>
    <location>
        <position position="64"/>
    </location>
</feature>
<feature type="sequence variant" id="VAR_038125" description="In dbSNP:rs937961." evidence="4">
    <original>R</original>
    <variation>H</variation>
    <location>
        <position position="354"/>
    </location>
</feature>
<feature type="sequence variant" id="VAR_038126" description="In dbSNP:rs16969673.">
    <original>E</original>
    <variation>G</variation>
    <location>
        <position position="374"/>
    </location>
</feature>
<feature type="sequence variant" id="VAR_038127" description="In dbSNP:rs10152640." evidence="4">
    <original>C</original>
    <variation>R</variation>
    <location>
        <position position="402"/>
    </location>
</feature>
<feature type="sequence variant" id="VAR_038128" description="In dbSNP:rs12908846.">
    <original>L</original>
    <variation>F</variation>
    <location>
        <position position="411"/>
    </location>
</feature>
<feature type="sequence variant" id="VAR_038129" description="In dbSNP:rs16969386.">
    <original>G</original>
    <variation>A</variation>
    <location>
        <position position="528"/>
    </location>
</feature>
<feature type="sequence conflict" description="In Ref. 1; AAP20066." evidence="5" ref="1">
    <original>S</original>
    <variation>R</variation>
    <location>
        <position position="75"/>
    </location>
</feature>
<feature type="sequence conflict" description="In Ref. 1; AAP20066." evidence="5" ref="1">
    <original>A</original>
    <variation>G</variation>
    <location>
        <position position="574"/>
    </location>
</feature>
<accession>Q8NA03</accession>
<accession>Q6X2C8</accession>
<accession>Q86Y89</accession>